<name>CH601_RHOBA</name>
<accession>Q7UM99</accession>
<keyword id="KW-0067">ATP-binding</keyword>
<keyword id="KW-0143">Chaperone</keyword>
<keyword id="KW-0963">Cytoplasm</keyword>
<keyword id="KW-0413">Isomerase</keyword>
<keyword id="KW-0547">Nucleotide-binding</keyword>
<keyword id="KW-1185">Reference proteome</keyword>
<evidence type="ECO:0000255" key="1">
    <source>
        <dbReference type="HAMAP-Rule" id="MF_00600"/>
    </source>
</evidence>
<evidence type="ECO:0000305" key="2"/>
<protein>
    <recommendedName>
        <fullName evidence="1">Chaperonin GroEL 1</fullName>
        <ecNumber evidence="1">5.6.1.7</ecNumber>
    </recommendedName>
    <alternativeName>
        <fullName evidence="1">60 kDa chaperonin 1</fullName>
    </alternativeName>
    <alternativeName>
        <fullName evidence="1">Chaperonin-60 1</fullName>
        <shortName evidence="1">Cpn60 1</shortName>
    </alternativeName>
</protein>
<comment type="function">
    <text evidence="1">Together with its co-chaperonin GroES, plays an essential role in assisting protein folding. The GroEL-GroES system forms a nano-cage that allows encapsulation of the non-native substrate proteins and provides a physical environment optimized to promote and accelerate protein folding.</text>
</comment>
<comment type="catalytic activity">
    <reaction evidence="1">
        <text>ATP + H2O + a folded polypeptide = ADP + phosphate + an unfolded polypeptide.</text>
        <dbReference type="EC" id="5.6.1.7"/>
    </reaction>
</comment>
<comment type="subunit">
    <text evidence="1">Forms a cylinder of 14 subunits composed of two heptameric rings stacked back-to-back. Interacts with the co-chaperonin GroES.</text>
</comment>
<comment type="subcellular location">
    <subcellularLocation>
        <location evidence="1">Cytoplasm</location>
    </subcellularLocation>
</comment>
<comment type="similarity">
    <text evidence="1">Belongs to the chaperonin (HSP60) family.</text>
</comment>
<comment type="sequence caution" evidence="2">
    <conflict type="erroneous initiation">
        <sequence resource="EMBL-CDS" id="CAD76018"/>
    </conflict>
</comment>
<organism>
    <name type="scientific">Rhodopirellula baltica (strain DSM 10527 / NCIMB 13988 / SH1)</name>
    <dbReference type="NCBI Taxonomy" id="243090"/>
    <lineage>
        <taxon>Bacteria</taxon>
        <taxon>Pseudomonadati</taxon>
        <taxon>Planctomycetota</taxon>
        <taxon>Planctomycetia</taxon>
        <taxon>Pirellulales</taxon>
        <taxon>Pirellulaceae</taxon>
        <taxon>Rhodopirellula</taxon>
    </lineage>
</organism>
<feature type="chain" id="PRO_0000063505" description="Chaperonin GroEL 1">
    <location>
        <begin position="1"/>
        <end position="571"/>
    </location>
</feature>
<feature type="binding site" evidence="1">
    <location>
        <begin position="29"/>
        <end position="32"/>
    </location>
    <ligand>
        <name>ATP</name>
        <dbReference type="ChEBI" id="CHEBI:30616"/>
    </ligand>
</feature>
<feature type="binding site" evidence="1">
    <location>
        <position position="50"/>
    </location>
    <ligand>
        <name>ATP</name>
        <dbReference type="ChEBI" id="CHEBI:30616"/>
    </ligand>
</feature>
<feature type="binding site" evidence="1">
    <location>
        <begin position="86"/>
        <end position="90"/>
    </location>
    <ligand>
        <name>ATP</name>
        <dbReference type="ChEBI" id="CHEBI:30616"/>
    </ligand>
</feature>
<feature type="binding site" evidence="1">
    <location>
        <position position="416"/>
    </location>
    <ligand>
        <name>ATP</name>
        <dbReference type="ChEBI" id="CHEBI:30616"/>
    </ligand>
</feature>
<feature type="binding site" evidence="1">
    <location>
        <position position="498"/>
    </location>
    <ligand>
        <name>ATP</name>
        <dbReference type="ChEBI" id="CHEBI:30616"/>
    </ligand>
</feature>
<reference key="1">
    <citation type="journal article" date="2003" name="Proc. Natl. Acad. Sci. U.S.A.">
        <title>Complete genome sequence of the marine planctomycete Pirellula sp. strain 1.</title>
        <authorList>
            <person name="Gloeckner F.O."/>
            <person name="Kube M."/>
            <person name="Bauer M."/>
            <person name="Teeling H."/>
            <person name="Lombardot T."/>
            <person name="Ludwig W."/>
            <person name="Gade D."/>
            <person name="Beck A."/>
            <person name="Borzym K."/>
            <person name="Heitmann K."/>
            <person name="Rabus R."/>
            <person name="Schlesner H."/>
            <person name="Amann R."/>
            <person name="Reinhardt R."/>
        </authorList>
    </citation>
    <scope>NUCLEOTIDE SEQUENCE [LARGE SCALE GENOMIC DNA]</scope>
    <source>
        <strain>DSM 10527 / NCIMB 13988 / SH1</strain>
    </source>
</reference>
<proteinExistence type="inferred from homology"/>
<sequence>MAKQIVFDDDARGPLLAGVSKLARAVRSTLGPRGRNAVLDKGWGSPKVTKDGVTVAEDIELDDPFENLGAQLVKEAASKTNDVAGDGTTTATVLSEAIFREGLKMVATGADPMALSRGIQKAVDTAIAQIAKMATPINEKSKSDIKQVATIAGNNDPQIGDVLADAFTKVGKNGVITVEEGRSNETYVDVVEGMQFDRGFLSPHFVTNQDEVTVELDDCYILLFEEKISNNKKMIPLLEAISKAKKPLLIIAEDTEGEALATLVVNKMRGILSACAVKAPGYGDRRKAILGDIAALTGGKAIFKDLGIDLESVKVSDLGRAKQIRITSEATTIVGGAGKKADIEGRVAQIRREIEATDSDYDREKLQERLAKLAGGVAQINVGAATETEMKERKALIDDARAATQAALEEGIVPGGGTALLRCRAAVEKLEKATEGDQKLGVRIIRNVLDQPMRAIANNAGLDGAVVVNRVLQMKGKTEGYDANADKYCDLVAAGIVDPAKVVRTSLTNAASVAALLLTTESLVTEIPVEEEPAGGDHHDHGMGGGMPDMGGMGMGGMGGMGGMGGMGGMM</sequence>
<gene>
    <name evidence="1" type="primary">groEL1</name>
    <name evidence="1" type="synonym">groL1</name>
    <name type="ordered locus">RB8966</name>
</gene>
<dbReference type="EC" id="5.6.1.7" evidence="1"/>
<dbReference type="EMBL" id="BX294148">
    <property type="protein sequence ID" value="CAD76018.1"/>
    <property type="status" value="ALT_INIT"/>
    <property type="molecule type" value="Genomic_DNA"/>
</dbReference>
<dbReference type="RefSeq" id="NP_868641.1">
    <property type="nucleotide sequence ID" value="NC_005027.1"/>
</dbReference>
<dbReference type="SMR" id="Q7UM99"/>
<dbReference type="STRING" id="243090.RB8966"/>
<dbReference type="EnsemblBacteria" id="CAD76018">
    <property type="protein sequence ID" value="CAD76018"/>
    <property type="gene ID" value="RB8966"/>
</dbReference>
<dbReference type="KEGG" id="rba:RB8966"/>
<dbReference type="PATRIC" id="fig|243090.15.peg.4301"/>
<dbReference type="eggNOG" id="COG0459">
    <property type="taxonomic scope" value="Bacteria"/>
</dbReference>
<dbReference type="HOGENOM" id="CLU_016503_3_0_0"/>
<dbReference type="InParanoid" id="Q7UM99"/>
<dbReference type="OrthoDB" id="9766614at2"/>
<dbReference type="Proteomes" id="UP000001025">
    <property type="component" value="Chromosome"/>
</dbReference>
<dbReference type="GO" id="GO:1990220">
    <property type="term" value="C:GroEL-GroES complex"/>
    <property type="evidence" value="ECO:0000318"/>
    <property type="project" value="GO_Central"/>
</dbReference>
<dbReference type="GO" id="GO:0005524">
    <property type="term" value="F:ATP binding"/>
    <property type="evidence" value="ECO:0000318"/>
    <property type="project" value="GO_Central"/>
</dbReference>
<dbReference type="GO" id="GO:0140662">
    <property type="term" value="F:ATP-dependent protein folding chaperone"/>
    <property type="evidence" value="ECO:0007669"/>
    <property type="project" value="InterPro"/>
</dbReference>
<dbReference type="GO" id="GO:0016853">
    <property type="term" value="F:isomerase activity"/>
    <property type="evidence" value="ECO:0007669"/>
    <property type="project" value="UniProtKB-KW"/>
</dbReference>
<dbReference type="GO" id="GO:0051082">
    <property type="term" value="F:unfolded protein binding"/>
    <property type="evidence" value="ECO:0000318"/>
    <property type="project" value="GO_Central"/>
</dbReference>
<dbReference type="GO" id="GO:0051085">
    <property type="term" value="P:chaperone cofactor-dependent protein refolding"/>
    <property type="evidence" value="ECO:0000318"/>
    <property type="project" value="GO_Central"/>
</dbReference>
<dbReference type="GO" id="GO:0042026">
    <property type="term" value="P:protein refolding"/>
    <property type="evidence" value="ECO:0007669"/>
    <property type="project" value="UniProtKB-UniRule"/>
</dbReference>
<dbReference type="GO" id="GO:0009408">
    <property type="term" value="P:response to heat"/>
    <property type="evidence" value="ECO:0000318"/>
    <property type="project" value="GO_Central"/>
</dbReference>
<dbReference type="CDD" id="cd03344">
    <property type="entry name" value="GroEL"/>
    <property type="match status" value="1"/>
</dbReference>
<dbReference type="FunFam" id="3.50.7.10:FF:000001">
    <property type="entry name" value="60 kDa chaperonin"/>
    <property type="match status" value="1"/>
</dbReference>
<dbReference type="Gene3D" id="3.50.7.10">
    <property type="entry name" value="GroEL"/>
    <property type="match status" value="1"/>
</dbReference>
<dbReference type="Gene3D" id="1.10.560.10">
    <property type="entry name" value="GroEL-like equatorial domain"/>
    <property type="match status" value="1"/>
</dbReference>
<dbReference type="Gene3D" id="3.30.260.10">
    <property type="entry name" value="TCP-1-like chaperonin intermediate domain"/>
    <property type="match status" value="1"/>
</dbReference>
<dbReference type="HAMAP" id="MF_00600">
    <property type="entry name" value="CH60"/>
    <property type="match status" value="1"/>
</dbReference>
<dbReference type="InterPro" id="IPR001844">
    <property type="entry name" value="Cpn60/GroEL"/>
</dbReference>
<dbReference type="InterPro" id="IPR002423">
    <property type="entry name" value="Cpn60/GroEL/TCP-1"/>
</dbReference>
<dbReference type="InterPro" id="IPR027409">
    <property type="entry name" value="GroEL-like_apical_dom_sf"/>
</dbReference>
<dbReference type="InterPro" id="IPR027413">
    <property type="entry name" value="GROEL-like_equatorial_sf"/>
</dbReference>
<dbReference type="InterPro" id="IPR027410">
    <property type="entry name" value="TCP-1-like_intermed_sf"/>
</dbReference>
<dbReference type="NCBIfam" id="TIGR02348">
    <property type="entry name" value="GroEL"/>
    <property type="match status" value="1"/>
</dbReference>
<dbReference type="NCBIfam" id="NF000592">
    <property type="entry name" value="PRK00013.1"/>
    <property type="match status" value="1"/>
</dbReference>
<dbReference type="NCBIfam" id="NF009487">
    <property type="entry name" value="PRK12849.1"/>
    <property type="match status" value="1"/>
</dbReference>
<dbReference type="NCBIfam" id="NF009488">
    <property type="entry name" value="PRK12850.1"/>
    <property type="match status" value="1"/>
</dbReference>
<dbReference type="NCBIfam" id="NF009489">
    <property type="entry name" value="PRK12851.1"/>
    <property type="match status" value="1"/>
</dbReference>
<dbReference type="PANTHER" id="PTHR45633">
    <property type="entry name" value="60 KDA HEAT SHOCK PROTEIN, MITOCHONDRIAL"/>
    <property type="match status" value="1"/>
</dbReference>
<dbReference type="Pfam" id="PF00118">
    <property type="entry name" value="Cpn60_TCP1"/>
    <property type="match status" value="1"/>
</dbReference>
<dbReference type="PRINTS" id="PR00298">
    <property type="entry name" value="CHAPERONIN60"/>
</dbReference>
<dbReference type="SUPFAM" id="SSF52029">
    <property type="entry name" value="GroEL apical domain-like"/>
    <property type="match status" value="1"/>
</dbReference>
<dbReference type="SUPFAM" id="SSF48592">
    <property type="entry name" value="GroEL equatorial domain-like"/>
    <property type="match status" value="1"/>
</dbReference>
<dbReference type="SUPFAM" id="SSF54849">
    <property type="entry name" value="GroEL-intermediate domain like"/>
    <property type="match status" value="1"/>
</dbReference>